<gene>
    <name type="ORF">SPBC1778.09</name>
</gene>
<protein>
    <recommendedName>
        <fullName>TBC domain-containing protein C1778.09</fullName>
    </recommendedName>
</protein>
<reference evidence="4" key="1">
    <citation type="journal article" date="2002" name="Nature">
        <title>The genome sequence of Schizosaccharomyces pombe.</title>
        <authorList>
            <person name="Wood V."/>
            <person name="Gwilliam R."/>
            <person name="Rajandream M.A."/>
            <person name="Lyne M.H."/>
            <person name="Lyne R."/>
            <person name="Stewart A."/>
            <person name="Sgouros J.G."/>
            <person name="Peat N."/>
            <person name="Hayles J."/>
            <person name="Baker S.G."/>
            <person name="Basham D."/>
            <person name="Bowman S."/>
            <person name="Brooks K."/>
            <person name="Brown D."/>
            <person name="Brown S."/>
            <person name="Chillingworth T."/>
            <person name="Churcher C.M."/>
            <person name="Collins M."/>
            <person name="Connor R."/>
            <person name="Cronin A."/>
            <person name="Davis P."/>
            <person name="Feltwell T."/>
            <person name="Fraser A."/>
            <person name="Gentles S."/>
            <person name="Goble A."/>
            <person name="Hamlin N."/>
            <person name="Harris D.E."/>
            <person name="Hidalgo J."/>
            <person name="Hodgson G."/>
            <person name="Holroyd S."/>
            <person name="Hornsby T."/>
            <person name="Howarth S."/>
            <person name="Huckle E.J."/>
            <person name="Hunt S."/>
            <person name="Jagels K."/>
            <person name="James K.D."/>
            <person name="Jones L."/>
            <person name="Jones M."/>
            <person name="Leather S."/>
            <person name="McDonald S."/>
            <person name="McLean J."/>
            <person name="Mooney P."/>
            <person name="Moule S."/>
            <person name="Mungall K.L."/>
            <person name="Murphy L.D."/>
            <person name="Niblett D."/>
            <person name="Odell C."/>
            <person name="Oliver K."/>
            <person name="O'Neil S."/>
            <person name="Pearson D."/>
            <person name="Quail M.A."/>
            <person name="Rabbinowitsch E."/>
            <person name="Rutherford K.M."/>
            <person name="Rutter S."/>
            <person name="Saunders D."/>
            <person name="Seeger K."/>
            <person name="Sharp S."/>
            <person name="Skelton J."/>
            <person name="Simmonds M.N."/>
            <person name="Squares R."/>
            <person name="Squares S."/>
            <person name="Stevens K."/>
            <person name="Taylor K."/>
            <person name="Taylor R.G."/>
            <person name="Tivey A."/>
            <person name="Walsh S.V."/>
            <person name="Warren T."/>
            <person name="Whitehead S."/>
            <person name="Woodward J.R."/>
            <person name="Volckaert G."/>
            <person name="Aert R."/>
            <person name="Robben J."/>
            <person name="Grymonprez B."/>
            <person name="Weltjens I."/>
            <person name="Vanstreels E."/>
            <person name="Rieger M."/>
            <person name="Schaefer M."/>
            <person name="Mueller-Auer S."/>
            <person name="Gabel C."/>
            <person name="Fuchs M."/>
            <person name="Duesterhoeft A."/>
            <person name="Fritzc C."/>
            <person name="Holzer E."/>
            <person name="Moestl D."/>
            <person name="Hilbert H."/>
            <person name="Borzym K."/>
            <person name="Langer I."/>
            <person name="Beck A."/>
            <person name="Lehrach H."/>
            <person name="Reinhardt R."/>
            <person name="Pohl T.M."/>
            <person name="Eger P."/>
            <person name="Zimmermann W."/>
            <person name="Wedler H."/>
            <person name="Wambutt R."/>
            <person name="Purnelle B."/>
            <person name="Goffeau A."/>
            <person name="Cadieu E."/>
            <person name="Dreano S."/>
            <person name="Gloux S."/>
            <person name="Lelaure V."/>
            <person name="Mottier S."/>
            <person name="Galibert F."/>
            <person name="Aves S.J."/>
            <person name="Xiang Z."/>
            <person name="Hunt C."/>
            <person name="Moore K."/>
            <person name="Hurst S.M."/>
            <person name="Lucas M."/>
            <person name="Rochet M."/>
            <person name="Gaillardin C."/>
            <person name="Tallada V.A."/>
            <person name="Garzon A."/>
            <person name="Thode G."/>
            <person name="Daga R.R."/>
            <person name="Cruzado L."/>
            <person name="Jimenez J."/>
            <person name="Sanchez M."/>
            <person name="del Rey F."/>
            <person name="Benito J."/>
            <person name="Dominguez A."/>
            <person name="Revuelta J.L."/>
            <person name="Moreno S."/>
            <person name="Armstrong J."/>
            <person name="Forsburg S.L."/>
            <person name="Cerutti L."/>
            <person name="Lowe T."/>
            <person name="McCombie W.R."/>
            <person name="Paulsen I."/>
            <person name="Potashkin J."/>
            <person name="Shpakovski G.V."/>
            <person name="Ussery D."/>
            <person name="Barrell B.G."/>
            <person name="Nurse P."/>
        </authorList>
    </citation>
    <scope>NUCLEOTIDE SEQUENCE [LARGE SCALE GENOMIC DNA]</scope>
    <source>
        <strain>972 / ATCC 24843</strain>
    </source>
</reference>
<reference evidence="3" key="2">
    <citation type="journal article" date="2006" name="Nat. Biotechnol.">
        <title>ORFeome cloning and global analysis of protein localization in the fission yeast Schizosaccharomyces pombe.</title>
        <authorList>
            <person name="Matsuyama A."/>
            <person name="Arai R."/>
            <person name="Yashiroda Y."/>
            <person name="Shirai A."/>
            <person name="Kamata A."/>
            <person name="Sekido S."/>
            <person name="Kobayashi Y."/>
            <person name="Hashimoto A."/>
            <person name="Hamamoto M."/>
            <person name="Hiraoka Y."/>
            <person name="Horinouchi S."/>
            <person name="Yoshida M."/>
        </authorList>
    </citation>
    <scope>SUBCELLULAR LOCATION [LARGE SCALE ANALYSIS]</scope>
</reference>
<feature type="chain" id="PRO_0000312840" description="TBC domain-containing protein C1778.09">
    <location>
        <begin position="1"/>
        <end position="414"/>
    </location>
</feature>
<feature type="domain" description="Rab-GAP TBC" evidence="1">
    <location>
        <begin position="158"/>
        <end position="343"/>
    </location>
</feature>
<comment type="subcellular location">
    <subcellularLocation>
        <location evidence="2">Cytoplasm</location>
    </subcellularLocation>
    <subcellularLocation>
        <location evidence="2">Nucleus</location>
    </subcellularLocation>
</comment>
<keyword id="KW-0963">Cytoplasm</keyword>
<keyword id="KW-0539">Nucleus</keyword>
<keyword id="KW-1185">Reference proteome</keyword>
<organism>
    <name type="scientific">Schizosaccharomyces pombe (strain 972 / ATCC 24843)</name>
    <name type="common">Fission yeast</name>
    <dbReference type="NCBI Taxonomy" id="284812"/>
    <lineage>
        <taxon>Eukaryota</taxon>
        <taxon>Fungi</taxon>
        <taxon>Dikarya</taxon>
        <taxon>Ascomycota</taxon>
        <taxon>Taphrinomycotina</taxon>
        <taxon>Schizosaccharomycetes</taxon>
        <taxon>Schizosaccharomycetales</taxon>
        <taxon>Schizosaccharomycetaceae</taxon>
        <taxon>Schizosaccharomyces</taxon>
    </lineage>
</organism>
<name>YOI9_SCHPO</name>
<sequence>MENPSPTRTTNLQRIRSLYRLQEDKNNLNIPEPINGKVQEIDTKESLENVDRYGNYRSDFNVNNLGFYKVSKDPTLDKPNPAKRLGNKLIGHDDMLKYVDESIFMVVPGESHDRNEISAKELSRIQKWKSMCSIHLVSGNQLHSFRKTRKLILRTFKGIPDCWRSIAWWSFLVDSLPDKKLIDKYYQLNEQICDYDVQIDLDVPRTAATHFLFRKRYIGGQRLLFRVLHAVALYIPRVGYVQGMASIAATLLIYYPEEQAFIMMVNLLENRGMGDLFSSGFDTLLKAFDMLKHELSFTQSGRHLAEIGAEPSAFATRWYLTVFHQCVPFHTQLRIWDLLFLLGGSKGQTVRLLQATSLAVIQGMWDTLIDADFEVVMQALSGVIPIQNDNALLARIQLFWEKMPSENSSKSKRN</sequence>
<evidence type="ECO:0000255" key="1">
    <source>
        <dbReference type="PROSITE-ProRule" id="PRU00163"/>
    </source>
</evidence>
<evidence type="ECO:0000269" key="2">
    <source>
    </source>
</evidence>
<evidence type="ECO:0000305" key="3"/>
<evidence type="ECO:0000312" key="4">
    <source>
        <dbReference type="EMBL" id="CAB39804.1"/>
    </source>
</evidence>
<accession>Q9Y7J5</accession>
<dbReference type="EMBL" id="CU329671">
    <property type="protein sequence ID" value="CAB39804.1"/>
    <property type="molecule type" value="Genomic_DNA"/>
</dbReference>
<dbReference type="PIR" id="T39691">
    <property type="entry name" value="T39691"/>
</dbReference>
<dbReference type="RefSeq" id="NP_596292.1">
    <property type="nucleotide sequence ID" value="NM_001022214.2"/>
</dbReference>
<dbReference type="SMR" id="Q9Y7J5"/>
<dbReference type="BioGRID" id="276268">
    <property type="interactions" value="35"/>
</dbReference>
<dbReference type="FunCoup" id="Q9Y7J5">
    <property type="interactions" value="2"/>
</dbReference>
<dbReference type="iPTMnet" id="Q9Y7J5"/>
<dbReference type="PaxDb" id="4896-SPBC1778.09.1"/>
<dbReference type="EnsemblFungi" id="SPBC1778.09.1">
    <property type="protein sequence ID" value="SPBC1778.09.1:pep"/>
    <property type="gene ID" value="SPBC1778.09"/>
</dbReference>
<dbReference type="KEGG" id="spo:2539715"/>
<dbReference type="PomBase" id="SPBC1778.09"/>
<dbReference type="VEuPathDB" id="FungiDB:SPBC1778.09"/>
<dbReference type="eggNOG" id="KOG1102">
    <property type="taxonomic scope" value="Eukaryota"/>
</dbReference>
<dbReference type="HOGENOM" id="CLU_003663_0_0_1"/>
<dbReference type="InParanoid" id="Q9Y7J5"/>
<dbReference type="OMA" id="ANFETAM"/>
<dbReference type="PhylomeDB" id="Q9Y7J5"/>
<dbReference type="Reactome" id="R-SPO-6811440">
    <property type="pathway name" value="Retrograde transport at the Trans-Golgi-Network"/>
</dbReference>
<dbReference type="PRO" id="PR:Q9Y7J5"/>
<dbReference type="Proteomes" id="UP000002485">
    <property type="component" value="Chromosome II"/>
</dbReference>
<dbReference type="GO" id="GO:0005829">
    <property type="term" value="C:cytosol"/>
    <property type="evidence" value="ECO:0007005"/>
    <property type="project" value="PomBase"/>
</dbReference>
<dbReference type="GO" id="GO:0005634">
    <property type="term" value="C:nucleus"/>
    <property type="evidence" value="ECO:0007005"/>
    <property type="project" value="PomBase"/>
</dbReference>
<dbReference type="GO" id="GO:0005096">
    <property type="term" value="F:GTPase activator activity"/>
    <property type="evidence" value="ECO:0000318"/>
    <property type="project" value="GO_Central"/>
</dbReference>
<dbReference type="GO" id="GO:0016192">
    <property type="term" value="P:vesicle-mediated transport"/>
    <property type="evidence" value="ECO:0000303"/>
    <property type="project" value="PomBase"/>
</dbReference>
<dbReference type="FunFam" id="1.10.8.270:FF:000023">
    <property type="entry name" value="TBC domain-containing protein C1778.09"/>
    <property type="match status" value="1"/>
</dbReference>
<dbReference type="Gene3D" id="1.10.8.270">
    <property type="entry name" value="putative rabgap domain of human tbc1 domain family member 14 like domains"/>
    <property type="match status" value="1"/>
</dbReference>
<dbReference type="Gene3D" id="1.10.472.80">
    <property type="entry name" value="Ypt/Rab-GAP domain of gyp1p, domain 3"/>
    <property type="match status" value="1"/>
</dbReference>
<dbReference type="InterPro" id="IPR000195">
    <property type="entry name" value="Rab-GAP-TBC_dom"/>
</dbReference>
<dbReference type="InterPro" id="IPR035969">
    <property type="entry name" value="Rab-GAP_TBC_sf"/>
</dbReference>
<dbReference type="InterPro" id="IPR050302">
    <property type="entry name" value="Rab_GAP_TBC_domain"/>
</dbReference>
<dbReference type="PANTHER" id="PTHR47219:SF9">
    <property type="entry name" value="GTPASE ACTIVATING PROTEIN AND CENTROSOME-ASSOCIATED, ISOFORM B"/>
    <property type="match status" value="1"/>
</dbReference>
<dbReference type="PANTHER" id="PTHR47219">
    <property type="entry name" value="RAB GTPASE-ACTIVATING PROTEIN 1-LIKE"/>
    <property type="match status" value="1"/>
</dbReference>
<dbReference type="Pfam" id="PF00566">
    <property type="entry name" value="RabGAP-TBC"/>
    <property type="match status" value="1"/>
</dbReference>
<dbReference type="SMART" id="SM00164">
    <property type="entry name" value="TBC"/>
    <property type="match status" value="1"/>
</dbReference>
<dbReference type="SUPFAM" id="SSF47923">
    <property type="entry name" value="Ypt/Rab-GAP domain of gyp1p"/>
    <property type="match status" value="2"/>
</dbReference>
<dbReference type="PROSITE" id="PS50086">
    <property type="entry name" value="TBC_RABGAP"/>
    <property type="match status" value="1"/>
</dbReference>
<proteinExistence type="predicted"/>